<comment type="function">
    <text evidence="6 8">F-actin regulator involved in anterograde Golgi to endosome transport: upon ubiquitination via 'Lys-33'-linked ubiquitin chains by the BCR(KLHL20) E3 ubiquitin ligase complex, interacts with EPS15 and localizes to the trans-Golgi network, where it promotes actin polymerization, thereby facilitating post-Golgi trafficking. May play a role in the maintenance of the Golgi apparatus morphology.</text>
</comment>
<comment type="subunit">
    <text evidence="6 8">Interacts with clathrin adapter AP1 complex. This interaction takes place at Golgi membranes and not AP1-positive endosomal membranes. Interacts (when ubiquitinated at Lys-472) with EPS15.</text>
</comment>
<comment type="interaction">
    <interactant intactId="EBI-6916167">
        <id>P57737</id>
    </interactant>
    <interactant intactId="EBI-8527498">
        <id>Q61471</id>
        <label>Tob1</label>
    </interactant>
    <organismsDiffer>true</organismsDiffer>
    <experiments>3</experiments>
</comment>
<comment type="subcellular location">
    <subcellularLocation>
        <location>Golgi apparatus membrane</location>
    </subcellularLocation>
    <subcellularLocation>
        <location>Golgi apparatus</location>
        <location>trans-Golgi network</location>
    </subcellularLocation>
    <subcellularLocation>
        <location evidence="1">Cytoplasmic vesicle</location>
    </subcellularLocation>
    <subcellularLocation>
        <location evidence="1">Cytoplasm</location>
        <location evidence="1">Cytosol</location>
    </subcellularLocation>
    <text>Predominantly cytosolic. Detected on vesicle-like cytoplasmic structures and on the cis-Golgi. Not associated with actin filaments.</text>
</comment>
<comment type="alternative products">
    <event type="alternative splicing"/>
    <isoform>
        <id>P57737-1</id>
        <name>1</name>
        <sequence type="displayed"/>
    </isoform>
    <isoform>
        <id>P57737-2</id>
        <name>2</name>
        <sequence type="described" ref="VSP_038152"/>
    </isoform>
    <isoform>
        <id>P57737-3</id>
        <name>3</name>
        <sequence type="described" ref="VSP_046022"/>
    </isoform>
    <isoform>
        <id>P57737-4</id>
        <name>4</name>
        <sequence type="described" ref="VSP_046752"/>
    </isoform>
</comment>
<comment type="tissue specificity">
    <text evidence="7">Widely expressed. Expressed in the spleen, peripheral leukocytes, testes, brain, thymus and small intestine.</text>
</comment>
<comment type="PTM">
    <text evidence="1">The membrane-associated form is phosphorylated on tyrosine residues.</text>
</comment>
<comment type="PTM">
    <text evidence="8">Ubiquitinated via 'Lys-33'-linked ubiquitin chains by the BCR(KLHL20) E3 ubiquitin ligase complex: 'Lys-33'-linked ubiquitination promotes interaction with EPS15 and facilitates actin polymerization at the trans-Golgi network, thereby facilitating post-Golgi trafficking. Deubiquitinated by ZRANB1/TRABID.</text>
</comment>
<comment type="similarity">
    <text evidence="11">Belongs to the WD repeat coronin family.</text>
</comment>
<comment type="caution">
    <text evidence="12">Reported to form a E3 ubiquitin-ligase complex and promote degradation of TOB1 (PubMed:21130766). Additional evidence is however required to confirm these data.</text>
</comment>
<reference key="1">
    <citation type="journal article" date="2004" name="FEBS Lett.">
        <title>Coronin 7, the mammalian POD-1 homologue, localizes to the Golgi apparatus.</title>
        <authorList>
            <person name="Rybakin V."/>
            <person name="Stumpf M."/>
            <person name="Schulze A."/>
            <person name="Majoul I.V."/>
            <person name="Noegel A.A."/>
            <person name="Hasse A."/>
        </authorList>
    </citation>
    <scope>NUCLEOTIDE SEQUENCE [MRNA] (ISOFORM 1)</scope>
</reference>
<reference key="2">
    <citation type="journal article" date="2004" name="Nat. Genet.">
        <title>Complete sequencing and characterization of 21,243 full-length human cDNAs.</title>
        <authorList>
            <person name="Ota T."/>
            <person name="Suzuki Y."/>
            <person name="Nishikawa T."/>
            <person name="Otsuki T."/>
            <person name="Sugiyama T."/>
            <person name="Irie R."/>
            <person name="Wakamatsu A."/>
            <person name="Hayashi K."/>
            <person name="Sato H."/>
            <person name="Nagai K."/>
            <person name="Kimura K."/>
            <person name="Makita H."/>
            <person name="Sekine M."/>
            <person name="Obayashi M."/>
            <person name="Nishi T."/>
            <person name="Shibahara T."/>
            <person name="Tanaka T."/>
            <person name="Ishii S."/>
            <person name="Yamamoto J."/>
            <person name="Saito K."/>
            <person name="Kawai Y."/>
            <person name="Isono Y."/>
            <person name="Nakamura Y."/>
            <person name="Nagahari K."/>
            <person name="Murakami K."/>
            <person name="Yasuda T."/>
            <person name="Iwayanagi T."/>
            <person name="Wagatsuma M."/>
            <person name="Shiratori A."/>
            <person name="Sudo H."/>
            <person name="Hosoiri T."/>
            <person name="Kaku Y."/>
            <person name="Kodaira H."/>
            <person name="Kondo H."/>
            <person name="Sugawara M."/>
            <person name="Takahashi M."/>
            <person name="Kanda K."/>
            <person name="Yokoi T."/>
            <person name="Furuya T."/>
            <person name="Kikkawa E."/>
            <person name="Omura Y."/>
            <person name="Abe K."/>
            <person name="Kamihara K."/>
            <person name="Katsuta N."/>
            <person name="Sato K."/>
            <person name="Tanikawa M."/>
            <person name="Yamazaki M."/>
            <person name="Ninomiya K."/>
            <person name="Ishibashi T."/>
            <person name="Yamashita H."/>
            <person name="Murakawa K."/>
            <person name="Fujimori K."/>
            <person name="Tanai H."/>
            <person name="Kimata M."/>
            <person name="Watanabe M."/>
            <person name="Hiraoka S."/>
            <person name="Chiba Y."/>
            <person name="Ishida S."/>
            <person name="Ono Y."/>
            <person name="Takiguchi S."/>
            <person name="Watanabe S."/>
            <person name="Yosida M."/>
            <person name="Hotuta T."/>
            <person name="Kusano J."/>
            <person name="Kanehori K."/>
            <person name="Takahashi-Fujii A."/>
            <person name="Hara H."/>
            <person name="Tanase T.-O."/>
            <person name="Nomura Y."/>
            <person name="Togiya S."/>
            <person name="Komai F."/>
            <person name="Hara R."/>
            <person name="Takeuchi K."/>
            <person name="Arita M."/>
            <person name="Imose N."/>
            <person name="Musashino K."/>
            <person name="Yuuki H."/>
            <person name="Oshima A."/>
            <person name="Sasaki N."/>
            <person name="Aotsuka S."/>
            <person name="Yoshikawa Y."/>
            <person name="Matsunawa H."/>
            <person name="Ichihara T."/>
            <person name="Shiohata N."/>
            <person name="Sano S."/>
            <person name="Moriya S."/>
            <person name="Momiyama H."/>
            <person name="Satoh N."/>
            <person name="Takami S."/>
            <person name="Terashima Y."/>
            <person name="Suzuki O."/>
            <person name="Nakagawa S."/>
            <person name="Senoh A."/>
            <person name="Mizoguchi H."/>
            <person name="Goto Y."/>
            <person name="Shimizu F."/>
            <person name="Wakebe H."/>
            <person name="Hishigaki H."/>
            <person name="Watanabe T."/>
            <person name="Sugiyama A."/>
            <person name="Takemoto M."/>
            <person name="Kawakami B."/>
            <person name="Yamazaki M."/>
            <person name="Watanabe K."/>
            <person name="Kumagai A."/>
            <person name="Itakura S."/>
            <person name="Fukuzumi Y."/>
            <person name="Fujimori Y."/>
            <person name="Komiyama M."/>
            <person name="Tashiro H."/>
            <person name="Tanigami A."/>
            <person name="Fujiwara T."/>
            <person name="Ono T."/>
            <person name="Yamada K."/>
            <person name="Fujii Y."/>
            <person name="Ozaki K."/>
            <person name="Hirao M."/>
            <person name="Ohmori Y."/>
            <person name="Kawabata A."/>
            <person name="Hikiji T."/>
            <person name="Kobatake N."/>
            <person name="Inagaki H."/>
            <person name="Ikema Y."/>
            <person name="Okamoto S."/>
            <person name="Okitani R."/>
            <person name="Kawakami T."/>
            <person name="Noguchi S."/>
            <person name="Itoh T."/>
            <person name="Shigeta K."/>
            <person name="Senba T."/>
            <person name="Matsumura K."/>
            <person name="Nakajima Y."/>
            <person name="Mizuno T."/>
            <person name="Morinaga M."/>
            <person name="Sasaki M."/>
            <person name="Togashi T."/>
            <person name="Oyama M."/>
            <person name="Hata H."/>
            <person name="Watanabe M."/>
            <person name="Komatsu T."/>
            <person name="Mizushima-Sugano J."/>
            <person name="Satoh T."/>
            <person name="Shirai Y."/>
            <person name="Takahashi Y."/>
            <person name="Nakagawa K."/>
            <person name="Okumura K."/>
            <person name="Nagase T."/>
            <person name="Nomura N."/>
            <person name="Kikuchi H."/>
            <person name="Masuho Y."/>
            <person name="Yamashita R."/>
            <person name="Nakai K."/>
            <person name="Yada T."/>
            <person name="Nakamura Y."/>
            <person name="Ohara O."/>
            <person name="Isogai T."/>
            <person name="Sugano S."/>
        </authorList>
    </citation>
    <scope>NUCLEOTIDE SEQUENCE [LARGE SCALE MRNA] (ISOFORMS 1; 2 AND 4)</scope>
    <scope>VARIANT GLN-193</scope>
    <source>
        <tissue>Cerebellum</tissue>
        <tissue>Hepatoma</tissue>
        <tissue>Tongue</tissue>
    </source>
</reference>
<reference key="3">
    <citation type="submission" date="2005-09" db="EMBL/GenBank/DDBJ databases">
        <authorList>
            <person name="Mural R.J."/>
            <person name="Istrail S."/>
            <person name="Sutton G.G."/>
            <person name="Florea L."/>
            <person name="Halpern A.L."/>
            <person name="Mobarry C.M."/>
            <person name="Lippert R."/>
            <person name="Walenz B."/>
            <person name="Shatkay H."/>
            <person name="Dew I."/>
            <person name="Miller J.R."/>
            <person name="Flanigan M.J."/>
            <person name="Edwards N.J."/>
            <person name="Bolanos R."/>
            <person name="Fasulo D."/>
            <person name="Halldorsson B.V."/>
            <person name="Hannenhalli S."/>
            <person name="Turner R."/>
            <person name="Yooseph S."/>
            <person name="Lu F."/>
            <person name="Nusskern D.R."/>
            <person name="Shue B.C."/>
            <person name="Zheng X.H."/>
            <person name="Zhong F."/>
            <person name="Delcher A.L."/>
            <person name="Huson D.H."/>
            <person name="Kravitz S.A."/>
            <person name="Mouchard L."/>
            <person name="Reinert K."/>
            <person name="Remington K.A."/>
            <person name="Clark A.G."/>
            <person name="Waterman M.S."/>
            <person name="Eichler E.E."/>
            <person name="Adams M.D."/>
            <person name="Hunkapiller M.W."/>
            <person name="Myers E.W."/>
            <person name="Venter J.C."/>
        </authorList>
    </citation>
    <scope>NUCLEOTIDE SEQUENCE [LARGE SCALE GENOMIC DNA]</scope>
</reference>
<reference key="4">
    <citation type="journal article" date="2004" name="Nature">
        <title>The sequence and analysis of duplication-rich human chromosome 16.</title>
        <authorList>
            <person name="Martin J."/>
            <person name="Han C."/>
            <person name="Gordon L.A."/>
            <person name="Terry A."/>
            <person name="Prabhakar S."/>
            <person name="She X."/>
            <person name="Xie G."/>
            <person name="Hellsten U."/>
            <person name="Chan Y.M."/>
            <person name="Altherr M."/>
            <person name="Couronne O."/>
            <person name="Aerts A."/>
            <person name="Bajorek E."/>
            <person name="Black S."/>
            <person name="Blumer H."/>
            <person name="Branscomb E."/>
            <person name="Brown N.C."/>
            <person name="Bruno W.J."/>
            <person name="Buckingham J.M."/>
            <person name="Callen D.F."/>
            <person name="Campbell C.S."/>
            <person name="Campbell M.L."/>
            <person name="Campbell E.W."/>
            <person name="Caoile C."/>
            <person name="Challacombe J.F."/>
            <person name="Chasteen L.A."/>
            <person name="Chertkov O."/>
            <person name="Chi H.C."/>
            <person name="Christensen M."/>
            <person name="Clark L.M."/>
            <person name="Cohn J.D."/>
            <person name="Denys M."/>
            <person name="Detter J.C."/>
            <person name="Dickson M."/>
            <person name="Dimitrijevic-Bussod M."/>
            <person name="Escobar J."/>
            <person name="Fawcett J.J."/>
            <person name="Flowers D."/>
            <person name="Fotopulos D."/>
            <person name="Glavina T."/>
            <person name="Gomez M."/>
            <person name="Gonzales E."/>
            <person name="Goodstein D."/>
            <person name="Goodwin L.A."/>
            <person name="Grady D.L."/>
            <person name="Grigoriev I."/>
            <person name="Groza M."/>
            <person name="Hammon N."/>
            <person name="Hawkins T."/>
            <person name="Haydu L."/>
            <person name="Hildebrand C.E."/>
            <person name="Huang W."/>
            <person name="Israni S."/>
            <person name="Jett J."/>
            <person name="Jewett P.B."/>
            <person name="Kadner K."/>
            <person name="Kimball H."/>
            <person name="Kobayashi A."/>
            <person name="Krawczyk M.-C."/>
            <person name="Leyba T."/>
            <person name="Longmire J.L."/>
            <person name="Lopez F."/>
            <person name="Lou Y."/>
            <person name="Lowry S."/>
            <person name="Ludeman T."/>
            <person name="Manohar C.F."/>
            <person name="Mark G.A."/>
            <person name="McMurray K.L."/>
            <person name="Meincke L.J."/>
            <person name="Morgan J."/>
            <person name="Moyzis R.K."/>
            <person name="Mundt M.O."/>
            <person name="Munk A.C."/>
            <person name="Nandkeshwar R.D."/>
            <person name="Pitluck S."/>
            <person name="Pollard M."/>
            <person name="Predki P."/>
            <person name="Parson-Quintana B."/>
            <person name="Ramirez L."/>
            <person name="Rash S."/>
            <person name="Retterer J."/>
            <person name="Ricke D.O."/>
            <person name="Robinson D.L."/>
            <person name="Rodriguez A."/>
            <person name="Salamov A."/>
            <person name="Saunders E.H."/>
            <person name="Scott D."/>
            <person name="Shough T."/>
            <person name="Stallings R.L."/>
            <person name="Stalvey M."/>
            <person name="Sutherland R.D."/>
            <person name="Tapia R."/>
            <person name="Tesmer J.G."/>
            <person name="Thayer N."/>
            <person name="Thompson L.S."/>
            <person name="Tice H."/>
            <person name="Torney D.C."/>
            <person name="Tran-Gyamfi M."/>
            <person name="Tsai M."/>
            <person name="Ulanovsky L.E."/>
            <person name="Ustaszewska A."/>
            <person name="Vo N."/>
            <person name="White P.S."/>
            <person name="Williams A.L."/>
            <person name="Wills P.L."/>
            <person name="Wu J.-R."/>
            <person name="Wu K."/>
            <person name="Yang J."/>
            <person name="DeJong P."/>
            <person name="Bruce D."/>
            <person name="Doggett N.A."/>
            <person name="Deaven L."/>
            <person name="Schmutz J."/>
            <person name="Grimwood J."/>
            <person name="Richardson P."/>
            <person name="Rokhsar D.S."/>
            <person name="Eichler E.E."/>
            <person name="Gilna P."/>
            <person name="Lucas S.M."/>
            <person name="Myers R.M."/>
            <person name="Rubin E.M."/>
            <person name="Pennacchio L.A."/>
        </authorList>
    </citation>
    <scope>NUCLEOTIDE SEQUENCE [LARGE SCALE GENOMIC DNA]</scope>
</reference>
<reference key="5">
    <citation type="journal article" date="2004" name="Genome Res.">
        <title>The status, quality, and expansion of the NIH full-length cDNA project: the Mammalian Gene Collection (MGC).</title>
        <authorList>
            <consortium name="The MGC Project Team"/>
        </authorList>
    </citation>
    <scope>NUCLEOTIDE SEQUENCE [LARGE SCALE MRNA] (ISOFORMS 1 AND 3)</scope>
    <source>
        <tissue>Colon</tissue>
        <tissue>Lymphoma</tissue>
    </source>
</reference>
<reference key="6">
    <citation type="journal article" date="2006" name="J. Biol. Chem.">
        <title>Crn7 interacts with AP-1 and is required for the maintenance of Golgi morphology and protein export from the Golgi.</title>
        <authorList>
            <person name="Rybakin V."/>
            <person name="Gounko N.V."/>
            <person name="Spaete K."/>
            <person name="Hoening S."/>
            <person name="Majoul I.V."/>
            <person name="Duden R."/>
            <person name="Noegel A.A."/>
        </authorList>
    </citation>
    <scope>FUNCTION</scope>
    <scope>SUBCELLULAR LOCATION</scope>
    <scope>INTERACTION WITH AP1 COMPLEX</scope>
</reference>
<reference key="7">
    <citation type="journal article" date="2008" name="Proc. Natl. Acad. Sci. U.S.A.">
        <title>A quantitative atlas of mitotic phosphorylation.</title>
        <authorList>
            <person name="Dephoure N."/>
            <person name="Zhou C."/>
            <person name="Villen J."/>
            <person name="Beausoleil S.A."/>
            <person name="Bakalarski C.E."/>
            <person name="Elledge S.J."/>
            <person name="Gygi S.P."/>
        </authorList>
    </citation>
    <scope>IDENTIFICATION BY MASS SPECTROMETRY [LARGE SCALE ANALYSIS]</scope>
    <source>
        <tissue>Cervix carcinoma</tissue>
    </source>
</reference>
<reference key="8">
    <citation type="journal article" date="2011" name="FEBS Lett.">
        <title>Coronin7 forms a novel E3 ubiquitin ligase complex to promote the degradation of the anti-proliferative protein Tob.</title>
        <authorList>
            <person name="Watanabe M."/>
            <person name="Suzuki T."/>
            <person name="Kim M."/>
            <person name="Abe Y."/>
            <person name="Yoshida Y."/>
            <person name="Sugano S."/>
            <person name="Yamamoto T."/>
        </authorList>
    </citation>
    <scope>TISSUE SPECIFICITY</scope>
</reference>
<reference key="9">
    <citation type="journal article" date="2014" name="Mol. Cell">
        <title>K33-linked polyubiquitination of coronin 7 by Cul3-KLHL20 ubiquitin E3 ligase regulates protein trafficking.</title>
        <authorList>
            <person name="Yuan W.C."/>
            <person name="Lee Y.R."/>
            <person name="Lin S.Y."/>
            <person name="Chang L.Y."/>
            <person name="Tan Y.P."/>
            <person name="Hung C.C."/>
            <person name="Kuo J.C."/>
            <person name="Liu C.H."/>
            <person name="Lin M.Y."/>
            <person name="Xu M."/>
            <person name="Chen Z.J."/>
            <person name="Chen R.H."/>
        </authorList>
    </citation>
    <scope>FUNCTION</scope>
    <scope>SUBCELLULAR LOCATION</scope>
    <scope>UBIQUITINATION AT LYS-472 AND LYS-680</scope>
    <scope>MUTAGENESIS OF LYS-472 AND LYS-680</scope>
    <scope>INTERACTION WITH EPS15</scope>
</reference>
<name>CORO7_HUMAN</name>
<sequence>MNRFRVSKFRHTEARPPRRESWISDIRAGTAPSCRNHIKSSCSLIAFNSDRPGVLGIVPLQGQGEDKRRVAHLGCHSDLVTDLDFSPFDDFLLATGSADRTVKLWRLPGPGQALPSAPGVVLGPEDLPVEVLQFHPTSDGILVSAAGTTVKVWDAAKQQPLTELAAHGDLVQSAVWSRDGALVGTACKDKQLRIFDPRTKPRASQSTQAHENSRDSRLAWMGTWEHLVSTGFNQMREREVKLWDTRFFSSALASLTLDTSLGCLVPLLDPDSGLLVLAGKGERQLYCYEVVPQQPALSPVTQCVLESVLRGAALVPRQALAVMSCEVLRVLQLSDTAIVPIGYHVPRKAVEFHEDLFPDTAGCVPATDPHSWWAGDNQQVQKVSLNPACRPHPSFTSCLVPPAEPLPDTAQPAVMETPVGDADASEGFSSPPSSLTSPSTPSSLGPSLSSTSGIGTSPSLRSLQSLLGPSSKFRHAQGTVLHRDSHITNLKGLNLTTPGESDGFCANKLRVAVPLLSSGGQVAVLELRKPGRLPDTALPTLQNGAAVTDLAWDPFDPHRLAVAGEDARIRLWRVPAEGLEEVLTTPETVLTGHTEKICSLRFHPLAANVLASSSYDLTVRIWDLQAGADRLKLQGHQDQIFSLAWSPDGQQLATVCKDGRVRVYRPRSGPEPLQEGPGPKGGRGARIVWVCDGRCLLVSGFDSQSERQLLLYEAEALAGGPLAVLGLDVAPSTLLPSYDPDTGLVLLTGKGDTRVFLYELLPESPFFLECNSFTSPDPHKGLVLLPKTECDVREVELMRCLRLRQSSLEPVAFRLPRVRKEFFQDDVFPDTAVIWEPVLSAEAWLQGANGQPWLLSLQPPDMSPVSQAPREAPARRAPSSAQYLEEKSDQQKKEELLNAMVAKLGNREDPLPQDSFEGVDEDEWD</sequence>
<accession>P57737</accession>
<accession>B4DFD6</accession>
<accession>B4DL18</accession>
<accession>I3L416</accession>
<accession>Q17RK4</accession>
<gene>
    <name type="primary">CORO7</name>
</gene>
<organism>
    <name type="scientific">Homo sapiens</name>
    <name type="common">Human</name>
    <dbReference type="NCBI Taxonomy" id="9606"/>
    <lineage>
        <taxon>Eukaryota</taxon>
        <taxon>Metazoa</taxon>
        <taxon>Chordata</taxon>
        <taxon>Craniata</taxon>
        <taxon>Vertebrata</taxon>
        <taxon>Euteleostomi</taxon>
        <taxon>Mammalia</taxon>
        <taxon>Eutheria</taxon>
        <taxon>Euarchontoglires</taxon>
        <taxon>Primates</taxon>
        <taxon>Haplorrhini</taxon>
        <taxon>Catarrhini</taxon>
        <taxon>Hominidae</taxon>
        <taxon>Homo</taxon>
    </lineage>
</organism>
<evidence type="ECO:0000250" key="1"/>
<evidence type="ECO:0000250" key="2">
    <source>
        <dbReference type="UniProtKB" id="O35828"/>
    </source>
</evidence>
<evidence type="ECO:0000250" key="3">
    <source>
        <dbReference type="UniProtKB" id="Q9D2V7"/>
    </source>
</evidence>
<evidence type="ECO:0000256" key="4">
    <source>
        <dbReference type="SAM" id="MobiDB-lite"/>
    </source>
</evidence>
<evidence type="ECO:0000269" key="5">
    <source>
    </source>
</evidence>
<evidence type="ECO:0000269" key="6">
    <source>
    </source>
</evidence>
<evidence type="ECO:0000269" key="7">
    <source>
    </source>
</evidence>
<evidence type="ECO:0000269" key="8">
    <source>
    </source>
</evidence>
<evidence type="ECO:0000303" key="9">
    <source>
    </source>
</evidence>
<evidence type="ECO:0000303" key="10">
    <source>
    </source>
</evidence>
<evidence type="ECO:0000305" key="11"/>
<evidence type="ECO:0000305" key="12">
    <source>
    </source>
</evidence>
<proteinExistence type="evidence at protein level"/>
<protein>
    <recommendedName>
        <fullName>Coronin-7</fullName>
        <shortName>Crn7</shortName>
    </recommendedName>
    <alternativeName>
        <fullName>70 kDa WD repeat tumor rejection antigen homolog</fullName>
    </alternativeName>
</protein>
<dbReference type="EMBL" id="AK025674">
    <property type="protein sequence ID" value="BAB15211.1"/>
    <property type="molecule type" value="mRNA"/>
</dbReference>
<dbReference type="EMBL" id="AK294045">
    <property type="protein sequence ID" value="BAG57397.1"/>
    <property type="molecule type" value="mRNA"/>
</dbReference>
<dbReference type="EMBL" id="AK296807">
    <property type="protein sequence ID" value="BAG59380.1"/>
    <property type="molecule type" value="mRNA"/>
</dbReference>
<dbReference type="EMBL" id="AC012676">
    <property type="status" value="NOT_ANNOTATED_CDS"/>
    <property type="molecule type" value="Genomic_DNA"/>
</dbReference>
<dbReference type="EMBL" id="CH471112">
    <property type="protein sequence ID" value="EAW85307.1"/>
    <property type="molecule type" value="Genomic_DNA"/>
</dbReference>
<dbReference type="EMBL" id="BC032732">
    <property type="status" value="NOT_ANNOTATED_CDS"/>
    <property type="molecule type" value="mRNA"/>
</dbReference>
<dbReference type="EMBL" id="BC117289">
    <property type="protein sequence ID" value="AAI17290.1"/>
    <property type="molecule type" value="mRNA"/>
</dbReference>
<dbReference type="EMBL" id="BC117291">
    <property type="protein sequence ID" value="AAI17292.1"/>
    <property type="molecule type" value="mRNA"/>
</dbReference>
<dbReference type="CCDS" id="CCDS10513.1">
    <molecule id="P57737-1"/>
</dbReference>
<dbReference type="CCDS" id="CCDS55982.1">
    <molecule id="P57737-2"/>
</dbReference>
<dbReference type="CCDS" id="CCDS58417.1">
    <molecule id="P57737-4"/>
</dbReference>
<dbReference type="RefSeq" id="NP_001188401.1">
    <molecule id="P57737-4"/>
    <property type="nucleotide sequence ID" value="NM_001201472.2"/>
</dbReference>
<dbReference type="RefSeq" id="NP_001188402.1">
    <molecule id="P57737-2"/>
    <property type="nucleotide sequence ID" value="NM_001201473.2"/>
</dbReference>
<dbReference type="RefSeq" id="NP_078811.3">
    <molecule id="P57737-1"/>
    <property type="nucleotide sequence ID" value="NM_024535.5"/>
</dbReference>
<dbReference type="BioGRID" id="122728">
    <property type="interactions" value="65"/>
</dbReference>
<dbReference type="BioGRID" id="1529373">
    <property type="interactions" value="18"/>
</dbReference>
<dbReference type="FunCoup" id="P57737">
    <property type="interactions" value="1548"/>
</dbReference>
<dbReference type="IntAct" id="P57737">
    <property type="interactions" value="40"/>
</dbReference>
<dbReference type="MINT" id="P57737"/>
<dbReference type="STRING" id="9606.ENSP00000251166"/>
<dbReference type="GlyGen" id="P57737">
    <property type="glycosylation" value="3 sites, 1 O-linked glycan (2 sites)"/>
</dbReference>
<dbReference type="iPTMnet" id="P57737"/>
<dbReference type="MetOSite" id="P57737"/>
<dbReference type="PhosphoSitePlus" id="P57737"/>
<dbReference type="BioMuta" id="CORO7"/>
<dbReference type="DMDM" id="259016200"/>
<dbReference type="jPOST" id="P57737"/>
<dbReference type="MassIVE" id="P57737"/>
<dbReference type="PaxDb" id="9606-ENSP00000251166"/>
<dbReference type="PeptideAtlas" id="P57737"/>
<dbReference type="ProteomicsDB" id="47379"/>
<dbReference type="ProteomicsDB" id="57024">
    <molecule id="P57737-1"/>
</dbReference>
<dbReference type="ProteomicsDB" id="57025">
    <molecule id="P57737-2"/>
</dbReference>
<dbReference type="Pumba" id="P57737"/>
<dbReference type="Antibodypedia" id="61575">
    <property type="antibodies" value="134 antibodies from 20 providers"/>
</dbReference>
<dbReference type="DNASU" id="79585"/>
<dbReference type="Ensembl" id="ENST00000251166.9">
    <molecule id="P57737-1"/>
    <property type="protein sequence ID" value="ENSP00000251166.4"/>
    <property type="gene ID" value="ENSG00000262246.6"/>
</dbReference>
<dbReference type="Ensembl" id="ENST00000537233.6">
    <molecule id="P57737-4"/>
    <property type="protein sequence ID" value="ENSP00000440460.2"/>
    <property type="gene ID" value="ENSG00000262246.6"/>
</dbReference>
<dbReference type="Ensembl" id="ENST00000574025.5">
    <molecule id="P57737-2"/>
    <property type="protein sequence ID" value="ENSP00000461702.1"/>
    <property type="gene ID" value="ENSG00000262246.6"/>
</dbReference>
<dbReference type="Ensembl" id="ENST00000614702.4">
    <molecule id="P57737-1"/>
    <property type="protein sequence ID" value="ENSP00000482646.1"/>
    <property type="gene ID" value="ENSG00000282725.1"/>
</dbReference>
<dbReference type="Ensembl" id="ENST00000617235.2">
    <molecule id="P57737-4"/>
    <property type="protein sequence ID" value="ENSP00000483187.2"/>
    <property type="gene ID" value="ENSG00000282725.1"/>
</dbReference>
<dbReference type="Ensembl" id="ENST00000631534.1">
    <molecule id="P57737-2"/>
    <property type="protein sequence ID" value="ENSP00000488867.1"/>
    <property type="gene ID" value="ENSG00000282725.1"/>
</dbReference>
<dbReference type="GeneID" id="79585"/>
<dbReference type="KEGG" id="hsa:79585"/>
<dbReference type="MANE-Select" id="ENST00000251166.9">
    <property type="protein sequence ID" value="ENSP00000251166.4"/>
    <property type="RefSeq nucleotide sequence ID" value="NM_024535.5"/>
    <property type="RefSeq protein sequence ID" value="NP_078811.3"/>
</dbReference>
<dbReference type="UCSC" id="uc002cwh.5">
    <molecule id="P57737-1"/>
    <property type="organism name" value="human"/>
</dbReference>
<dbReference type="AGR" id="HGNC:26161"/>
<dbReference type="CTD" id="79585"/>
<dbReference type="DisGeNET" id="79585"/>
<dbReference type="GeneCards" id="CORO7"/>
<dbReference type="HGNC" id="HGNC:26161">
    <property type="gene designation" value="CORO7"/>
</dbReference>
<dbReference type="HPA" id="ENSG00000262246">
    <property type="expression patterns" value="Tissue enhanced (bone)"/>
</dbReference>
<dbReference type="MIM" id="611668">
    <property type="type" value="gene"/>
</dbReference>
<dbReference type="neXtProt" id="NX_P57737"/>
<dbReference type="OpenTargets" id="ENSG00000262246"/>
<dbReference type="PharmGKB" id="PA134910806"/>
<dbReference type="VEuPathDB" id="HostDB:ENSG00000262246"/>
<dbReference type="eggNOG" id="KOG1445">
    <property type="taxonomic scope" value="Eukaryota"/>
</dbReference>
<dbReference type="eggNOG" id="KOG3442">
    <property type="taxonomic scope" value="Eukaryota"/>
</dbReference>
<dbReference type="GeneTree" id="ENSGT00940000156606"/>
<dbReference type="HOGENOM" id="CLU_006604_0_0_1"/>
<dbReference type="InParanoid" id="P57737"/>
<dbReference type="OMA" id="TIMYMEV"/>
<dbReference type="OrthoDB" id="1850764at2759"/>
<dbReference type="PAN-GO" id="P57737">
    <property type="GO annotations" value="2 GO annotations based on evolutionary models"/>
</dbReference>
<dbReference type="PhylomeDB" id="P57737"/>
<dbReference type="TreeFam" id="TF314280"/>
<dbReference type="PathwayCommons" id="P57737"/>
<dbReference type="SignaLink" id="P57737"/>
<dbReference type="SIGNOR" id="P57737"/>
<dbReference type="BioGRID-ORCS" id="79585">
    <property type="hits" value="13 hits in 1059 CRISPR screens"/>
</dbReference>
<dbReference type="GenomeRNAi" id="79585"/>
<dbReference type="Pharos" id="P57737">
    <property type="development level" value="Tbio"/>
</dbReference>
<dbReference type="PRO" id="PR:P57737"/>
<dbReference type="Proteomes" id="UP000005640">
    <property type="component" value="Chromosome 16"/>
</dbReference>
<dbReference type="RNAct" id="P57737">
    <property type="molecule type" value="protein"/>
</dbReference>
<dbReference type="Bgee" id="ENSG00000262246">
    <property type="expression patterns" value="Expressed in granulocyte and 94 other cell types or tissues"/>
</dbReference>
<dbReference type="ExpressionAtlas" id="P57737">
    <property type="expression patterns" value="baseline and differential"/>
</dbReference>
<dbReference type="GO" id="GO:0031410">
    <property type="term" value="C:cytoplasmic vesicle"/>
    <property type="evidence" value="ECO:0007669"/>
    <property type="project" value="UniProtKB-KW"/>
</dbReference>
<dbReference type="GO" id="GO:0005829">
    <property type="term" value="C:cytosol"/>
    <property type="evidence" value="ECO:0007669"/>
    <property type="project" value="UniProtKB-SubCell"/>
</dbReference>
<dbReference type="GO" id="GO:0005794">
    <property type="term" value="C:Golgi apparatus"/>
    <property type="evidence" value="ECO:0000250"/>
    <property type="project" value="UniProtKB"/>
</dbReference>
<dbReference type="GO" id="GO:0000139">
    <property type="term" value="C:Golgi membrane"/>
    <property type="evidence" value="ECO:0007669"/>
    <property type="project" value="UniProtKB-SubCell"/>
</dbReference>
<dbReference type="GO" id="GO:0016020">
    <property type="term" value="C:membrane"/>
    <property type="evidence" value="ECO:0007005"/>
    <property type="project" value="UniProtKB"/>
</dbReference>
<dbReference type="GO" id="GO:0005802">
    <property type="term" value="C:trans-Golgi network"/>
    <property type="evidence" value="ECO:0000314"/>
    <property type="project" value="UniProtKB"/>
</dbReference>
<dbReference type="GO" id="GO:0003779">
    <property type="term" value="F:actin binding"/>
    <property type="evidence" value="ECO:0000314"/>
    <property type="project" value="UniProtKB"/>
</dbReference>
<dbReference type="GO" id="GO:0030041">
    <property type="term" value="P:actin filament polymerization"/>
    <property type="evidence" value="ECO:0000315"/>
    <property type="project" value="UniProtKB"/>
</dbReference>
<dbReference type="GO" id="GO:0016477">
    <property type="term" value="P:cell migration"/>
    <property type="evidence" value="ECO:0007669"/>
    <property type="project" value="Ensembl"/>
</dbReference>
<dbReference type="GO" id="GO:0030010">
    <property type="term" value="P:establishment of cell polarity"/>
    <property type="evidence" value="ECO:0007669"/>
    <property type="project" value="Ensembl"/>
</dbReference>
<dbReference type="GO" id="GO:0007030">
    <property type="term" value="P:Golgi organization"/>
    <property type="evidence" value="ECO:0007669"/>
    <property type="project" value="Ensembl"/>
</dbReference>
<dbReference type="GO" id="GO:0006895">
    <property type="term" value="P:Golgi to endosome transport"/>
    <property type="evidence" value="ECO:0000315"/>
    <property type="project" value="UniProtKB"/>
</dbReference>
<dbReference type="GO" id="GO:0035332">
    <property type="term" value="P:positive regulation of hippo signaling"/>
    <property type="evidence" value="ECO:0000315"/>
    <property type="project" value="FlyBase"/>
</dbReference>
<dbReference type="GO" id="GO:0015031">
    <property type="term" value="P:protein transport"/>
    <property type="evidence" value="ECO:0007669"/>
    <property type="project" value="UniProtKB-KW"/>
</dbReference>
<dbReference type="FunFam" id="2.130.10.10:FF:000076">
    <property type="entry name" value="Coronin"/>
    <property type="match status" value="1"/>
</dbReference>
<dbReference type="FunFam" id="2.130.10.10:FF:000310">
    <property type="entry name" value="Coronin"/>
    <property type="match status" value="1"/>
</dbReference>
<dbReference type="Gene3D" id="2.130.10.10">
    <property type="entry name" value="YVTN repeat-like/Quinoprotein amine dehydrogenase"/>
    <property type="match status" value="2"/>
</dbReference>
<dbReference type="InterPro" id="IPR015505">
    <property type="entry name" value="Coronin"/>
</dbReference>
<dbReference type="InterPro" id="IPR015048">
    <property type="entry name" value="DUF1899"/>
</dbReference>
<dbReference type="InterPro" id="IPR020472">
    <property type="entry name" value="G-protein_beta_WD-40_rep"/>
</dbReference>
<dbReference type="InterPro" id="IPR015943">
    <property type="entry name" value="WD40/YVTN_repeat-like_dom_sf"/>
</dbReference>
<dbReference type="InterPro" id="IPR019775">
    <property type="entry name" value="WD40_repeat_CS"/>
</dbReference>
<dbReference type="InterPro" id="IPR036322">
    <property type="entry name" value="WD40_repeat_dom_sf"/>
</dbReference>
<dbReference type="InterPro" id="IPR001680">
    <property type="entry name" value="WD40_rpt"/>
</dbReference>
<dbReference type="PANTHER" id="PTHR10856">
    <property type="entry name" value="CORONIN"/>
    <property type="match status" value="1"/>
</dbReference>
<dbReference type="PANTHER" id="PTHR10856:SF20">
    <property type="entry name" value="CORONIN-7"/>
    <property type="match status" value="1"/>
</dbReference>
<dbReference type="Pfam" id="PF08953">
    <property type="entry name" value="DUF1899"/>
    <property type="match status" value="2"/>
</dbReference>
<dbReference type="Pfam" id="PF00400">
    <property type="entry name" value="WD40"/>
    <property type="match status" value="5"/>
</dbReference>
<dbReference type="Pfam" id="PF16300">
    <property type="entry name" value="WD40_4"/>
    <property type="match status" value="2"/>
</dbReference>
<dbReference type="PRINTS" id="PR00320">
    <property type="entry name" value="GPROTEINBRPT"/>
</dbReference>
<dbReference type="SMART" id="SM01166">
    <property type="entry name" value="DUF1899"/>
    <property type="match status" value="2"/>
</dbReference>
<dbReference type="SMART" id="SM01167">
    <property type="entry name" value="DUF1900"/>
    <property type="match status" value="2"/>
</dbReference>
<dbReference type="SMART" id="SM00320">
    <property type="entry name" value="WD40"/>
    <property type="match status" value="7"/>
</dbReference>
<dbReference type="SUPFAM" id="SSF101908">
    <property type="entry name" value="Putative isomerase YbhE"/>
    <property type="match status" value="1"/>
</dbReference>
<dbReference type="SUPFAM" id="SSF50978">
    <property type="entry name" value="WD40 repeat-like"/>
    <property type="match status" value="1"/>
</dbReference>
<dbReference type="PROSITE" id="PS00678">
    <property type="entry name" value="WD_REPEATS_1"/>
    <property type="match status" value="1"/>
</dbReference>
<dbReference type="PROSITE" id="PS50082">
    <property type="entry name" value="WD_REPEATS_2"/>
    <property type="match status" value="4"/>
</dbReference>
<dbReference type="PROSITE" id="PS50294">
    <property type="entry name" value="WD_REPEATS_REGION"/>
    <property type="match status" value="2"/>
</dbReference>
<keyword id="KW-0009">Actin-binding</keyword>
<keyword id="KW-0025">Alternative splicing</keyword>
<keyword id="KW-0963">Cytoplasm</keyword>
<keyword id="KW-0968">Cytoplasmic vesicle</keyword>
<keyword id="KW-0333">Golgi apparatus</keyword>
<keyword id="KW-1017">Isopeptide bond</keyword>
<keyword id="KW-0472">Membrane</keyword>
<keyword id="KW-0597">Phosphoprotein</keyword>
<keyword id="KW-0653">Protein transport</keyword>
<keyword id="KW-1267">Proteomics identification</keyword>
<keyword id="KW-1185">Reference proteome</keyword>
<keyword id="KW-0677">Repeat</keyword>
<keyword id="KW-0813">Transport</keyword>
<keyword id="KW-0832">Ubl conjugation</keyword>
<keyword id="KW-0853">WD repeat</keyword>
<feature type="chain" id="PRO_0000050934" description="Coronin-7">
    <location>
        <begin position="1"/>
        <end position="925"/>
    </location>
</feature>
<feature type="repeat" description="WD 1">
    <location>
        <begin position="75"/>
        <end position="115"/>
    </location>
</feature>
<feature type="repeat" description="WD 2">
    <location>
        <begin position="124"/>
        <end position="163"/>
    </location>
</feature>
<feature type="repeat" description="WD 3">
    <location>
        <begin position="166"/>
        <end position="205"/>
    </location>
</feature>
<feature type="repeat" description="WD 4">
    <location>
        <begin position="209"/>
        <end position="253"/>
    </location>
</feature>
<feature type="repeat" description="WD 5">
    <location>
        <begin position="542"/>
        <end position="582"/>
    </location>
</feature>
<feature type="repeat" description="WD 6">
    <location>
        <begin position="592"/>
        <end position="632"/>
    </location>
</feature>
<feature type="repeat" description="WD 7">
    <location>
        <begin position="635"/>
        <end position="674"/>
    </location>
</feature>
<feature type="repeat" description="WD 8">
    <location>
        <begin position="728"/>
        <end position="768"/>
    </location>
</feature>
<feature type="region of interest" description="Disordered" evidence="4">
    <location>
        <begin position="419"/>
        <end position="461"/>
    </location>
</feature>
<feature type="region of interest" description="Disordered" evidence="4">
    <location>
        <begin position="858"/>
        <end position="925"/>
    </location>
</feature>
<feature type="compositionally biased region" description="Low complexity" evidence="4">
    <location>
        <begin position="429"/>
        <end position="460"/>
    </location>
</feature>
<feature type="compositionally biased region" description="Low complexity" evidence="4">
    <location>
        <begin position="866"/>
        <end position="882"/>
    </location>
</feature>
<feature type="compositionally biased region" description="Basic and acidic residues" evidence="4">
    <location>
        <begin position="884"/>
        <end position="896"/>
    </location>
</feature>
<feature type="modified residue" description="Phosphoserine" evidence="3">
    <location>
        <position position="462"/>
    </location>
</feature>
<feature type="modified residue" description="Phosphoserine" evidence="2">
    <location>
        <position position="465"/>
    </location>
</feature>
<feature type="modified residue" description="Phosphoserine" evidence="3">
    <location>
        <position position="915"/>
    </location>
</feature>
<feature type="cross-link" description="Glycyl lysine isopeptide (Lys-Gly) (interchain with G-Cter in ubiquitin)" evidence="8">
    <location>
        <position position="472"/>
    </location>
</feature>
<feature type="cross-link" description="Glycyl lysine isopeptide (Lys-Gly) (interchain with G-Cter in ubiquitin)" evidence="8">
    <location>
        <position position="680"/>
    </location>
</feature>
<feature type="splice variant" id="VSP_038152" description="In isoform 2." evidence="9">
    <location>
        <begin position="78"/>
        <end position="162"/>
    </location>
</feature>
<feature type="splice variant" id="VSP_046752" description="In isoform 4." evidence="9">
    <location>
        <begin position="78"/>
        <end position="95"/>
    </location>
</feature>
<feature type="splice variant" id="VSP_046022" description="In isoform 3." evidence="10">
    <original>D</original>
    <variation>AKYLAQIIVMGVQVVGRAFARALRQEFAASRAAADARGRAGHRSAAASNLSGLSLQEAQQILNVSKLSPEEVQKNYEHLFKVNDKSVGGSFYLQSKVVRAKERLDEELKIQAQEDREKGQMPHT</variation>
    <location>
        <position position="925"/>
    </location>
</feature>
<feature type="sequence variant" id="VAR_057585" description="In dbSNP:rs17137007.">
    <original>A</original>
    <variation>V</variation>
    <location>
        <position position="174"/>
    </location>
</feature>
<feature type="sequence variant" id="VAR_057586" description="In dbSNP:rs3747579." evidence="5">
    <original>R</original>
    <variation>Q</variation>
    <location>
        <position position="193"/>
    </location>
</feature>
<feature type="sequence variant" id="VAR_057587" description="In dbSNP:rs35357594.">
    <original>L</original>
    <variation>S</variation>
    <location>
        <position position="257"/>
    </location>
</feature>
<feature type="sequence variant" id="VAR_057588" description="In dbSNP:rs9928967.">
    <original>A</original>
    <variation>T</variation>
    <location>
        <position position="403"/>
    </location>
</feature>
<feature type="mutagenesis site" description="Impaired ability to regulate the anterograde Golgi to endosome transport." evidence="8">
    <original>K</original>
    <variation>R</variation>
    <location>
        <position position="472"/>
    </location>
</feature>
<feature type="mutagenesis site" description="Does not affect ability to regulate the anterograde Golgi to endosome transport." evidence="8">
    <original>K</original>
    <variation>R</variation>
    <location>
        <position position="680"/>
    </location>
</feature>
<feature type="sequence conflict" description="In Ref. 2; BAB15211." evidence="11" ref="2">
    <original>S</original>
    <variation>G</variation>
    <location>
        <position position="324"/>
    </location>
</feature>
<feature type="sequence conflict" description="In Ref. 2; BAB15211." evidence="11" ref="2">
    <original>S</original>
    <variation>G</variation>
    <location>
        <position position="371"/>
    </location>
</feature>
<feature type="sequence conflict" description="In Ref. 2; BAB15211." evidence="11" ref="2">
    <original>A</original>
    <variation>T</variation>
    <location>
        <position position="848"/>
    </location>
</feature>
<feature type="sequence conflict" description="In Ref. 4; BC032732." evidence="11" ref="4">
    <original>Q</original>
    <variation>K</variation>
    <location sequence="P57737-3">
        <position position="1037"/>
    </location>
</feature>